<protein>
    <recommendedName>
        <fullName>Lantibiotic epilancin</fullName>
    </recommendedName>
</protein>
<proteinExistence type="evidence at protein level"/>
<dbReference type="EMBL" id="X87412">
    <property type="protein sequence ID" value="CAA60860.1"/>
    <property type="molecule type" value="Genomic_DNA"/>
</dbReference>
<dbReference type="EMBL" id="U20348">
    <property type="protein sequence ID" value="AAA79236.1"/>
    <property type="molecule type" value="Genomic_DNA"/>
</dbReference>
<dbReference type="PIR" id="S65681">
    <property type="entry name" value="S65681"/>
</dbReference>
<dbReference type="TCDB" id="1.C.20.2.2">
    <property type="family name" value="the nisin (nisin) family"/>
</dbReference>
<dbReference type="GO" id="GO:0005102">
    <property type="term" value="F:signaling receptor binding"/>
    <property type="evidence" value="ECO:0007669"/>
    <property type="project" value="UniProtKB-KW"/>
</dbReference>
<dbReference type="GO" id="GO:0042742">
    <property type="term" value="P:defense response to bacterium"/>
    <property type="evidence" value="ECO:0007669"/>
    <property type="project" value="UniProtKB-KW"/>
</dbReference>
<dbReference type="GO" id="GO:0031640">
    <property type="term" value="P:killing of cells of another organism"/>
    <property type="evidence" value="ECO:0007669"/>
    <property type="project" value="UniProtKB-KW"/>
</dbReference>
<dbReference type="NCBIfam" id="NF047830">
    <property type="entry name" value="lanti_ElxA"/>
    <property type="match status" value="1"/>
</dbReference>
<name>LANEL_STAEP</name>
<evidence type="ECO:0000250" key="1">
    <source>
        <dbReference type="UniProtKB" id="P86047"/>
    </source>
</evidence>
<evidence type="ECO:0000269" key="2">
    <source>
    </source>
</evidence>
<evidence type="ECO:0000305" key="3"/>
<evidence type="ECO:0000305" key="4">
    <source>
    </source>
</evidence>
<keyword id="KW-0044">Antibiotic</keyword>
<keyword id="KW-0929">Antimicrobial</keyword>
<keyword id="KW-0078">Bacteriocin</keyword>
<keyword id="KW-0208">D-amino acid</keyword>
<keyword id="KW-0903">Direct protein sequencing</keyword>
<keyword id="KW-0425">Lantibiotic</keyword>
<keyword id="KW-0883">Thioether bond</keyword>
<organism>
    <name type="scientific">Staphylococcus epidermidis</name>
    <dbReference type="NCBI Taxonomy" id="1282"/>
    <lineage>
        <taxon>Bacteria</taxon>
        <taxon>Bacillati</taxon>
        <taxon>Bacillota</taxon>
        <taxon>Bacilli</taxon>
        <taxon>Bacillales</taxon>
        <taxon>Staphylococcaceae</taxon>
        <taxon>Staphylococcus</taxon>
    </lineage>
</organism>
<gene>
    <name type="primary">elkA</name>
</gene>
<accession>Q57312</accession>
<sequence length="55" mass="5851">MNNSLFDLNLNKGVETQKSDLSPQSASVLKTSIKVSKKYCKGVTLTCGCNITGGK</sequence>
<reference key="1">
    <citation type="journal article" date="1995" name="Eur. J. Biochem.">
        <title>Elucidation of the primary structure of the lantibiotic epilancin K7 from Staphylococcus epidermidis K7. Cloning and characterisation of the epilancin-K7-encoding gene and NMR analysis of mature epilancin K7.</title>
        <authorList>
            <person name="Van de Kamp M."/>
            <person name="Van den Hooven H.W."/>
            <person name="Konings R.N.H."/>
            <person name="Bierbaum G."/>
            <person name="Sahl H.-G."/>
            <person name="Kuipers O.P."/>
            <person name="Siezen R.J."/>
            <person name="de Vos W.M."/>
            <person name="Hilbers C.W."/>
            <person name="Van de Ven F.J.M."/>
        </authorList>
    </citation>
    <scope>NUCLEOTIDE SEQUENCE [GENOMIC DNA]</scope>
    <scope>PROTEIN SEQUENCE OF 25-55</scope>
    <scope>DEHYDRATION AT SER-27; THR-31; SER-32 AND THR-52</scope>
    <source>
        <strain>K7</strain>
    </source>
</reference>
<comment type="function">
    <text evidence="1">Lanthionine-containing peptide antibiotic (lantibiotic) active on Gram-positive bacteria such as staphylococci, enterococci and streptococci (By similarity). The bactericidal activity of lantibiotics is based on depolarization of energized bacterial cytoplasmic membranes, initiated by the formation of aqueous transmembrane pores (By similarity).</text>
</comment>
<comment type="PTM">
    <text evidence="1">Maturation of this lantibiotic involves the enzymatic conversion of Thr, and Ser into dehydrated AA by ElxB and the formation of thioether bonds with cysteine by the cyclase ElxC (By similarity). The next steps are cleavage of the leader peptide by ElxP and membrane translocation by ElxT (By similarity). The leader peptide may be removed before membrane translocation, in contrast to other lantibiotics for which the cleavage occur after translocation (By similarity). This is suggested by the probable cytoplasmic localization of the serine protease ElxP that cleaves the leader peptide (By similarity).</text>
</comment>
<comment type="PTM">
    <text evidence="2">It is not established whether the 2,3-didehydrobutyrine is the E- or Z-isomer.</text>
</comment>
<comment type="PTM">
    <text evidence="1 4">The N-terminal D-lactate is probably produced by dehydration of Ser-25 by ElxB, followed by proteolytic removal of the leader peptide by the serine protease ElxP and hydrolysis of the resulting new N-terminal dehydroalanine (By similarity). This hydrolysis may occur spontaneously (Probable). The pyruvate group thus formed is reduced to D-lactate by the NADPH-dependent oxidoreductase ElxO (By similarity). This N-terminal D-lactate protects the lantibiotic against degradation against aminopeptidase (By similarity).</text>
</comment>
<comment type="similarity">
    <text evidence="3">Belongs to the type A lantibiotic family.</text>
</comment>
<feature type="propeptide" id="PRO_0000275927" description="Cleaved by ElxP" evidence="1 2">
    <location>
        <begin position="1"/>
        <end position="24"/>
    </location>
</feature>
<feature type="peptide" id="PRO_0000275928" description="Lantibiotic epilancin" evidence="2">
    <location>
        <begin position="25"/>
        <end position="55"/>
    </location>
</feature>
<feature type="modified residue" description="D-lactate; by the dehydratase ElxB and the dehydrogenase ElxO" evidence="1 2">
    <location>
        <position position="25"/>
    </location>
</feature>
<feature type="modified residue" description="2,3-didehydroalanine (Ser); by the dehydratase ElxB" evidence="1 2">
    <location>
        <position position="27"/>
    </location>
</feature>
<feature type="modified residue" description="2,3-didehydrobutyrine; by the dehydratase ElxB" evidence="1 2">
    <location>
        <position position="31"/>
    </location>
</feature>
<feature type="modified residue" description="2,3-didehydroalanine (Ser); by the dehydratase ElxB" evidence="1 2">
    <location>
        <position position="32"/>
    </location>
</feature>
<feature type="modified residue" description="2,3-didehydrobutyrine; by the dehydratase ElxB" evidence="1 2">
    <location>
        <position position="52"/>
    </location>
</feature>
<feature type="cross-link" description="Lanthionine (Ser-Cys); by the dehydratase ElxB and the cyclase ElxC" evidence="1 2">
    <location>
        <begin position="36"/>
        <end position="40"/>
    </location>
</feature>
<feature type="cross-link" description="Beta-methyllanthionine (Thr-Cys); by the dehydratase ElxB and the cyclase ElxC" evidence="1 2">
    <location>
        <begin position="44"/>
        <end position="47"/>
    </location>
</feature>
<feature type="cross-link" description="Beta-methyllanthionine (Thr-Cys); by the dehydratase ElxB and the cyclase ElxC" evidence="1 2">
    <location>
        <begin position="46"/>
        <end position="49"/>
    </location>
</feature>